<keyword id="KW-1185">Reference proteome</keyword>
<keyword id="KW-0694">RNA-binding</keyword>
<organism>
    <name type="scientific">Aquareovirus C (isolate Golden shiner/USA/GSRV/1977)</name>
    <name type="common">AQRV-C</name>
    <dbReference type="NCBI Taxonomy" id="185783"/>
    <lineage>
        <taxon>Viruses</taxon>
        <taxon>Riboviria</taxon>
        <taxon>Orthornavirae</taxon>
        <taxon>Duplornaviricota</taxon>
        <taxon>Resentoviricetes</taxon>
        <taxon>Reovirales</taxon>
        <taxon>Spinareoviridae</taxon>
        <taxon>Aquareovirus</taxon>
        <taxon>Aquareovirus ctenopharyngodontis</taxon>
    </lineage>
</organism>
<comment type="function">
    <text evidence="1">Protein that binds to ssRNA and may be involved in genome packaging.</text>
</comment>
<comment type="subunit">
    <text evidence="1">Homomultimer.</text>
</comment>
<comment type="similarity">
    <text evidence="2">Belongs to the aquareoviridae NS2 protein family.</text>
</comment>
<name>VNS2_AQRVC</name>
<evidence type="ECO:0000250" key="1"/>
<evidence type="ECO:0000305" key="2"/>
<feature type="chain" id="PRO_0000404176" description="Non-structural protein 2">
    <location>
        <begin position="1"/>
        <end position="352"/>
    </location>
</feature>
<gene>
    <name type="primary">S9</name>
</gene>
<reference key="1">
    <citation type="journal article" date="2002" name="J. Gen. Virol.">
        <title>Common evolutionary origin of aquareoviruses and orthoreoviruses revealed by genome characterization of Golden shiner reovirus, Grass carp reovirus, Striped bass reovirus and golden ide reovirus (genus Aquareovirus, family Reoviridae).</title>
        <authorList>
            <person name="Attoui H."/>
            <person name="Fang Q."/>
            <person name="Mohd Jaafar F."/>
            <person name="Cantaloube J.F."/>
            <person name="Biagini P."/>
            <person name="de Micco P."/>
            <person name="de Lamballerie X."/>
        </authorList>
    </citation>
    <scope>NUCLEOTIDE SEQUENCE [GENOMIC RNA]</scope>
</reference>
<protein>
    <recommendedName>
        <fullName>Non-structural protein 2</fullName>
        <shortName>NS2</shortName>
    </recommendedName>
</protein>
<organismHost>
    <name type="scientific">Notemigonus crysoleucas</name>
    <name type="common">Golden shiner</name>
    <name type="synonym">Cyprinus crysoleucas</name>
    <dbReference type="NCBI Taxonomy" id="28800"/>
</organismHost>
<organismHost>
    <name type="scientific">Pimephales promelas</name>
    <name type="common">Fathead minnow</name>
    <dbReference type="NCBI Taxonomy" id="90988"/>
</organismHost>
<accession>Q8JJE2</accession>
<proteinExistence type="inferred from homology"/>
<sequence>MAHTGTATLINAERTDRTLRLLETFPSLTITIRQDTSGRDLVSSVYSATGMSAAARNLNPIANVKNMRQPGYVKPAHTATNTVPLRVATSTGLELPTAHLAQMPVDQALRDAVAAAVPAHAARVLPPNVDRVTPLTLASRVAMVCAGLDCDDIHEIAPAPTAMALAFTTKVLLIHVVVDGTGASIAVNPGAARDLLKADQLGNVITNYGYDVRGTVRRDTAAALAPSELPDTYPIEWLGLICGLIATQIELDLDMLAMNQTEQKLIAPHVQAVDPFINRLQSYATLSSRLMHLCVTHAQRPFRDFPELLRHWQKPELTPAIPVNIALKGAALEVSGNGAELFRVRALPIGGM</sequence>
<dbReference type="EMBL" id="AF403406">
    <property type="protein sequence ID" value="AAM92753.1"/>
    <property type="molecule type" value="Genomic_RNA"/>
</dbReference>
<dbReference type="RefSeq" id="NP_938069.1">
    <property type="nucleotide sequence ID" value="NC_005174.1"/>
</dbReference>
<dbReference type="KEGG" id="vg:2648338"/>
<dbReference type="Proteomes" id="UP000006713">
    <property type="component" value="Genome"/>
</dbReference>
<dbReference type="GO" id="GO:0003968">
    <property type="term" value="F:RNA-directed RNA polymerase activity"/>
    <property type="evidence" value="ECO:0007669"/>
    <property type="project" value="InterPro"/>
</dbReference>
<dbReference type="GO" id="GO:0003727">
    <property type="term" value="F:single-stranded RNA binding"/>
    <property type="evidence" value="ECO:0007669"/>
    <property type="project" value="InterPro"/>
</dbReference>
<dbReference type="InterPro" id="IPR002507">
    <property type="entry name" value="Reovirus_polyG_pol"/>
</dbReference>
<dbReference type="Pfam" id="PF01518">
    <property type="entry name" value="PolyG_pol"/>
    <property type="match status" value="1"/>
</dbReference>